<organism>
    <name type="scientific">Cyanophora paradoxa</name>
    <dbReference type="NCBI Taxonomy" id="2762"/>
    <lineage>
        <taxon>Eukaryota</taxon>
        <taxon>Glaucocystophyceae</taxon>
        <taxon>Cyanophoraceae</taxon>
        <taxon>Cyanophora</taxon>
    </lineage>
</organism>
<protein>
    <recommendedName>
        <fullName evidence="2">Cytochrome b6-f complex subunit 7</fullName>
    </recommendedName>
    <alternativeName>
        <fullName evidence="2">Cytochrome b6-f complex subunit PetM</fullName>
    </alternativeName>
    <alternativeName>
        <fullName evidence="2">Cytochrome b6-f complex subunit VII</fullName>
    </alternativeName>
</protein>
<accession>P48366</accession>
<keyword id="KW-0194">Cyanelle</keyword>
<keyword id="KW-0249">Electron transport</keyword>
<keyword id="KW-0472">Membrane</keyword>
<keyword id="KW-0602">Photosynthesis</keyword>
<keyword id="KW-0934">Plastid</keyword>
<keyword id="KW-0793">Thylakoid</keyword>
<keyword id="KW-0812">Transmembrane</keyword>
<keyword id="KW-1133">Transmembrane helix</keyword>
<keyword id="KW-0813">Transport</keyword>
<comment type="function">
    <text evidence="2">Component of the cytochrome b6-f complex, which mediates electron transfer between photosystem II (PSII) and photosystem I (PSI), cyclic electron flow around PSI, and state transitions.</text>
</comment>
<comment type="subunit">
    <text evidence="2">The 4 large subunits of the cytochrome b6-f complex are cytochrome b6, subunit IV (17 kDa polypeptide, PetD), cytochrome f and the Rieske protein, while the 4 small subunits are PetG, PetL, PetM and PetN. The complex functions as a dimer.</text>
</comment>
<comment type="subcellular location">
    <subcellularLocation>
        <location evidence="1">Plastid</location>
        <location evidence="1">Cyanelle thylakoid membrane</location>
        <topology evidence="2">Single-pass membrane protein</topology>
    </subcellularLocation>
</comment>
<comment type="similarity">
    <text evidence="2">Belongs to the PetM family.</text>
</comment>
<evidence type="ECO:0000250" key="1"/>
<evidence type="ECO:0000255" key="2">
    <source>
        <dbReference type="HAMAP-Rule" id="MF_00396"/>
    </source>
</evidence>
<name>PETM_CYAPA</name>
<geneLocation type="cyanelle"/>
<proteinExistence type="inferred from homology"/>
<dbReference type="EMBL" id="U30821">
    <property type="protein sequence ID" value="AAA81186.1"/>
    <property type="molecule type" value="Genomic_DNA"/>
</dbReference>
<dbReference type="PIR" id="T06843">
    <property type="entry name" value="T06843"/>
</dbReference>
<dbReference type="SMR" id="P48366"/>
<dbReference type="GO" id="GO:0033115">
    <property type="term" value="C:cyanelle thylakoid membrane"/>
    <property type="evidence" value="ECO:0007669"/>
    <property type="project" value="UniProtKB-SubCell"/>
</dbReference>
<dbReference type="GO" id="GO:0009512">
    <property type="term" value="C:cytochrome b6f complex"/>
    <property type="evidence" value="ECO:0007669"/>
    <property type="project" value="InterPro"/>
</dbReference>
<dbReference type="GO" id="GO:0009055">
    <property type="term" value="F:electron transfer activity"/>
    <property type="evidence" value="ECO:0007669"/>
    <property type="project" value="UniProtKB-UniRule"/>
</dbReference>
<dbReference type="GO" id="GO:0015979">
    <property type="term" value="P:photosynthesis"/>
    <property type="evidence" value="ECO:0007669"/>
    <property type="project" value="UniProtKB-KW"/>
</dbReference>
<dbReference type="HAMAP" id="MF_00396">
    <property type="entry name" value="Cytb6_f_PetM"/>
    <property type="match status" value="1"/>
</dbReference>
<dbReference type="InterPro" id="IPR012595">
    <property type="entry name" value="PetM_cyt_b6/f_cplx_su7"/>
</dbReference>
<dbReference type="NCBIfam" id="NF008826">
    <property type="entry name" value="PRK11876.1-2"/>
    <property type="match status" value="1"/>
</dbReference>
<dbReference type="Pfam" id="PF08041">
    <property type="entry name" value="PetM"/>
    <property type="match status" value="1"/>
</dbReference>
<dbReference type="SUPFAM" id="SSF103441">
    <property type="entry name" value="PetM subunit of the cytochrome b6f complex"/>
    <property type="match status" value="1"/>
</dbReference>
<sequence>MGKQIFNTAVICFTLTLIGLSLGFVLLKIQGDE</sequence>
<reference key="1">
    <citation type="journal article" date="1995" name="Plant Mol. Biol. Rep.">
        <title>Nucleotide sequence of the cyanelle DNA from Cyanophora paradoxa.</title>
        <authorList>
            <person name="Stirewalt V.L."/>
            <person name="Michalowski C.B."/>
            <person name="Loeffelhardt W."/>
            <person name="Bohnert H.J."/>
            <person name="Bryant D.A."/>
        </authorList>
    </citation>
    <scope>NUCLEOTIDE SEQUENCE [LARGE SCALE GENOMIC DNA]</scope>
    <source>
        <strain>UTEX LB 555 / Pringsheim</strain>
    </source>
</reference>
<reference key="2">
    <citation type="book" date="1997" name="Eukaryotism and symbiosis">
        <title>The complete sequence of the cyanelle genome of Cyanophora paradoxa: the genetic complexity of a primitive plastid.</title>
        <editorList>
            <person name="Schenk H.E.A."/>
            <person name="Herrmann R."/>
            <person name="Jeon K.W."/>
            <person name="Mueller N.E."/>
            <person name="Schwemmler W."/>
        </editorList>
        <authorList>
            <person name="Loeffelhardt W."/>
            <person name="Stirewalt V.L."/>
            <person name="Michalowski C.B."/>
            <person name="Annarella M."/>
            <person name="Farley J.Y."/>
            <person name="Schluchter W.M."/>
            <person name="Chung S."/>
            <person name="Newmann-Spallart C."/>
            <person name="Steiner J.M."/>
            <person name="Jakowitsch J."/>
            <person name="Bohnert H.J."/>
            <person name="Bryant D.A."/>
        </authorList>
    </citation>
    <scope>NUCLEOTIDE SEQUENCE [LARGE SCALE GENOMIC DNA]</scope>
    <source>
        <strain>UTEX LB 555 / Pringsheim</strain>
    </source>
</reference>
<feature type="chain" id="PRO_0000218009" description="Cytochrome b6-f complex subunit 7">
    <location>
        <begin position="1"/>
        <end position="33"/>
    </location>
</feature>
<feature type="transmembrane region" description="Helical" evidence="2">
    <location>
        <begin position="9"/>
        <end position="29"/>
    </location>
</feature>
<gene>
    <name evidence="2" type="primary">petM</name>
    <name type="synonym">ycf31</name>
</gene>